<comment type="catalytic activity">
    <reaction evidence="1">
        <text>tRNA(Cys) + L-cysteine + ATP = L-cysteinyl-tRNA(Cys) + AMP + diphosphate</text>
        <dbReference type="Rhea" id="RHEA:17773"/>
        <dbReference type="Rhea" id="RHEA-COMP:9661"/>
        <dbReference type="Rhea" id="RHEA-COMP:9679"/>
        <dbReference type="ChEBI" id="CHEBI:30616"/>
        <dbReference type="ChEBI" id="CHEBI:33019"/>
        <dbReference type="ChEBI" id="CHEBI:35235"/>
        <dbReference type="ChEBI" id="CHEBI:78442"/>
        <dbReference type="ChEBI" id="CHEBI:78517"/>
        <dbReference type="ChEBI" id="CHEBI:456215"/>
        <dbReference type="EC" id="6.1.1.16"/>
    </reaction>
</comment>
<comment type="cofactor">
    <cofactor evidence="1">
        <name>Zn(2+)</name>
        <dbReference type="ChEBI" id="CHEBI:29105"/>
    </cofactor>
    <text evidence="1">Binds 1 zinc ion per subunit.</text>
</comment>
<comment type="subunit">
    <text evidence="1">Monomer.</text>
</comment>
<comment type="subcellular location">
    <subcellularLocation>
        <location evidence="1">Cytoplasm</location>
    </subcellularLocation>
</comment>
<comment type="similarity">
    <text evidence="1">Belongs to the class-I aminoacyl-tRNA synthetase family.</text>
</comment>
<protein>
    <recommendedName>
        <fullName evidence="1">Cysteine--tRNA ligase</fullName>
        <ecNumber evidence="1">6.1.1.16</ecNumber>
    </recommendedName>
    <alternativeName>
        <fullName evidence="1">Cysteinyl-tRNA synthetase</fullName>
        <shortName evidence="1">CysRS</shortName>
    </alternativeName>
</protein>
<reference key="1">
    <citation type="journal article" date="2005" name="Nucleic Acids Res.">
        <title>Genome dynamics and diversity of Shigella species, the etiologic agents of bacillary dysentery.</title>
        <authorList>
            <person name="Yang F."/>
            <person name="Yang J."/>
            <person name="Zhang X."/>
            <person name="Chen L."/>
            <person name="Jiang Y."/>
            <person name="Yan Y."/>
            <person name="Tang X."/>
            <person name="Wang J."/>
            <person name="Xiong Z."/>
            <person name="Dong J."/>
            <person name="Xue Y."/>
            <person name="Zhu Y."/>
            <person name="Xu X."/>
            <person name="Sun L."/>
            <person name="Chen S."/>
            <person name="Nie H."/>
            <person name="Peng J."/>
            <person name="Xu J."/>
            <person name="Wang Y."/>
            <person name="Yuan Z."/>
            <person name="Wen Y."/>
            <person name="Yao Z."/>
            <person name="Shen Y."/>
            <person name="Qiang B."/>
            <person name="Hou Y."/>
            <person name="Yu J."/>
            <person name="Jin Q."/>
        </authorList>
    </citation>
    <scope>NUCLEOTIDE SEQUENCE [LARGE SCALE GENOMIC DNA]</scope>
    <source>
        <strain>Ss046</strain>
    </source>
</reference>
<gene>
    <name evidence="1" type="primary">cysS</name>
    <name type="ordered locus">SSON_0492</name>
</gene>
<keyword id="KW-0030">Aminoacyl-tRNA synthetase</keyword>
<keyword id="KW-0067">ATP-binding</keyword>
<keyword id="KW-0963">Cytoplasm</keyword>
<keyword id="KW-0436">Ligase</keyword>
<keyword id="KW-0479">Metal-binding</keyword>
<keyword id="KW-0547">Nucleotide-binding</keyword>
<keyword id="KW-0648">Protein biosynthesis</keyword>
<keyword id="KW-1185">Reference proteome</keyword>
<keyword id="KW-0862">Zinc</keyword>
<organism>
    <name type="scientific">Shigella sonnei (strain Ss046)</name>
    <dbReference type="NCBI Taxonomy" id="300269"/>
    <lineage>
        <taxon>Bacteria</taxon>
        <taxon>Pseudomonadati</taxon>
        <taxon>Pseudomonadota</taxon>
        <taxon>Gammaproteobacteria</taxon>
        <taxon>Enterobacterales</taxon>
        <taxon>Enterobacteriaceae</taxon>
        <taxon>Shigella</taxon>
    </lineage>
</organism>
<evidence type="ECO:0000255" key="1">
    <source>
        <dbReference type="HAMAP-Rule" id="MF_00041"/>
    </source>
</evidence>
<feature type="chain" id="PRO_0000240956" description="Cysteine--tRNA ligase">
    <location>
        <begin position="1"/>
        <end position="461"/>
    </location>
</feature>
<feature type="short sequence motif" description="'HIGH' region">
    <location>
        <begin position="30"/>
        <end position="40"/>
    </location>
</feature>
<feature type="short sequence motif" description="'KMSKS' region">
    <location>
        <begin position="266"/>
        <end position="270"/>
    </location>
</feature>
<feature type="binding site" evidence="1">
    <location>
        <position position="28"/>
    </location>
    <ligand>
        <name>Zn(2+)</name>
        <dbReference type="ChEBI" id="CHEBI:29105"/>
    </ligand>
</feature>
<feature type="binding site" evidence="1">
    <location>
        <position position="209"/>
    </location>
    <ligand>
        <name>Zn(2+)</name>
        <dbReference type="ChEBI" id="CHEBI:29105"/>
    </ligand>
</feature>
<feature type="binding site" evidence="1">
    <location>
        <position position="234"/>
    </location>
    <ligand>
        <name>Zn(2+)</name>
        <dbReference type="ChEBI" id="CHEBI:29105"/>
    </ligand>
</feature>
<feature type="binding site" evidence="1">
    <location>
        <position position="238"/>
    </location>
    <ligand>
        <name>Zn(2+)</name>
        <dbReference type="ChEBI" id="CHEBI:29105"/>
    </ligand>
</feature>
<feature type="binding site" evidence="1">
    <location>
        <position position="269"/>
    </location>
    <ligand>
        <name>ATP</name>
        <dbReference type="ChEBI" id="CHEBI:30616"/>
    </ligand>
</feature>
<proteinExistence type="inferred from homology"/>
<sequence>MLKIFNTLTRQKEEFKPIHAGEVGMYVCGITVYDLCHIGHGRTFVAFDVVARYLRFLGYKLKYVRNITDIDDKIIKRANENGESFVALVDRMIAEMHKDFDALNILRPDMEPRATHHIAEIIELTEQLIAKGHAYAADNGDVMFDVPTDPTYGVLSRQDLDQLQAGARVDVVDDKRNPMDFVLWKMSKEGEPSWPSPWGAGRPGWHIECSAMNCKQLGNHFDIHGGGSDLMFPHHENEIAQSTCAHDGQYVNYWMHSGMVMVDREKMSKSLGNFFTVRDVLKYYDAETVRYFLMSGHYRSQLNYSEENLKQARAALERLYTALRGTEKTVAPAGGEAFEARFIEAMDDDFNTPEAYSVLFDMAREVNRLKAEDMAAANAMASHLRKLSAVLGLLEQEPEAFLQSGAQADDSEVAEIEALIQQRLDARKAKDWAAADAARDRLNEMGIVLEDGPQGTTWRRK</sequence>
<name>SYC_SHISS</name>
<dbReference type="EC" id="6.1.1.16" evidence="1"/>
<dbReference type="EMBL" id="CP000038">
    <property type="protein sequence ID" value="AAZ87267.1"/>
    <property type="molecule type" value="Genomic_DNA"/>
</dbReference>
<dbReference type="RefSeq" id="WP_000912336.1">
    <property type="nucleotide sequence ID" value="NC_007384.1"/>
</dbReference>
<dbReference type="SMR" id="Q3Z4P5"/>
<dbReference type="GeneID" id="93776946"/>
<dbReference type="KEGG" id="ssn:SSON_0492"/>
<dbReference type="HOGENOM" id="CLU_013528_0_1_6"/>
<dbReference type="Proteomes" id="UP000002529">
    <property type="component" value="Chromosome"/>
</dbReference>
<dbReference type="GO" id="GO:0005829">
    <property type="term" value="C:cytosol"/>
    <property type="evidence" value="ECO:0007669"/>
    <property type="project" value="TreeGrafter"/>
</dbReference>
<dbReference type="GO" id="GO:0005524">
    <property type="term" value="F:ATP binding"/>
    <property type="evidence" value="ECO:0007669"/>
    <property type="project" value="UniProtKB-UniRule"/>
</dbReference>
<dbReference type="GO" id="GO:0004817">
    <property type="term" value="F:cysteine-tRNA ligase activity"/>
    <property type="evidence" value="ECO:0007669"/>
    <property type="project" value="UniProtKB-UniRule"/>
</dbReference>
<dbReference type="GO" id="GO:0008270">
    <property type="term" value="F:zinc ion binding"/>
    <property type="evidence" value="ECO:0007669"/>
    <property type="project" value="UniProtKB-UniRule"/>
</dbReference>
<dbReference type="GO" id="GO:0006423">
    <property type="term" value="P:cysteinyl-tRNA aminoacylation"/>
    <property type="evidence" value="ECO:0007669"/>
    <property type="project" value="UniProtKB-UniRule"/>
</dbReference>
<dbReference type="CDD" id="cd07963">
    <property type="entry name" value="Anticodon_Ia_Cys"/>
    <property type="match status" value="1"/>
</dbReference>
<dbReference type="CDD" id="cd00672">
    <property type="entry name" value="CysRS_core"/>
    <property type="match status" value="1"/>
</dbReference>
<dbReference type="FunFam" id="1.20.120.1910:FF:000001">
    <property type="entry name" value="Cysteine--tRNA ligase"/>
    <property type="match status" value="1"/>
</dbReference>
<dbReference type="FunFam" id="3.40.50.620:FF:000009">
    <property type="entry name" value="Cysteine--tRNA ligase"/>
    <property type="match status" value="1"/>
</dbReference>
<dbReference type="Gene3D" id="1.20.120.1910">
    <property type="entry name" value="Cysteine-tRNA ligase, C-terminal anti-codon recognition domain"/>
    <property type="match status" value="1"/>
</dbReference>
<dbReference type="Gene3D" id="3.40.50.620">
    <property type="entry name" value="HUPs"/>
    <property type="match status" value="1"/>
</dbReference>
<dbReference type="HAMAP" id="MF_00041">
    <property type="entry name" value="Cys_tRNA_synth"/>
    <property type="match status" value="1"/>
</dbReference>
<dbReference type="InterPro" id="IPR015803">
    <property type="entry name" value="Cys-tRNA-ligase"/>
</dbReference>
<dbReference type="InterPro" id="IPR015273">
    <property type="entry name" value="Cys-tRNA-synt_Ia_DALR"/>
</dbReference>
<dbReference type="InterPro" id="IPR024909">
    <property type="entry name" value="Cys-tRNA/MSH_ligase"/>
</dbReference>
<dbReference type="InterPro" id="IPR056411">
    <property type="entry name" value="CysS_C"/>
</dbReference>
<dbReference type="InterPro" id="IPR014729">
    <property type="entry name" value="Rossmann-like_a/b/a_fold"/>
</dbReference>
<dbReference type="InterPro" id="IPR032678">
    <property type="entry name" value="tRNA-synt_1_cat_dom"/>
</dbReference>
<dbReference type="InterPro" id="IPR009080">
    <property type="entry name" value="tRNAsynth_Ia_anticodon-bd"/>
</dbReference>
<dbReference type="NCBIfam" id="TIGR00435">
    <property type="entry name" value="cysS"/>
    <property type="match status" value="1"/>
</dbReference>
<dbReference type="PANTHER" id="PTHR10890:SF3">
    <property type="entry name" value="CYSTEINE--TRNA LIGASE, CYTOPLASMIC"/>
    <property type="match status" value="1"/>
</dbReference>
<dbReference type="PANTHER" id="PTHR10890">
    <property type="entry name" value="CYSTEINYL-TRNA SYNTHETASE"/>
    <property type="match status" value="1"/>
</dbReference>
<dbReference type="Pfam" id="PF23493">
    <property type="entry name" value="CysS_C"/>
    <property type="match status" value="1"/>
</dbReference>
<dbReference type="Pfam" id="PF09190">
    <property type="entry name" value="DALR_2"/>
    <property type="match status" value="1"/>
</dbReference>
<dbReference type="Pfam" id="PF01406">
    <property type="entry name" value="tRNA-synt_1e"/>
    <property type="match status" value="1"/>
</dbReference>
<dbReference type="PRINTS" id="PR00983">
    <property type="entry name" value="TRNASYNTHCYS"/>
</dbReference>
<dbReference type="SMART" id="SM00840">
    <property type="entry name" value="DALR_2"/>
    <property type="match status" value="1"/>
</dbReference>
<dbReference type="SUPFAM" id="SSF47323">
    <property type="entry name" value="Anticodon-binding domain of a subclass of class I aminoacyl-tRNA synthetases"/>
    <property type="match status" value="1"/>
</dbReference>
<dbReference type="SUPFAM" id="SSF52374">
    <property type="entry name" value="Nucleotidylyl transferase"/>
    <property type="match status" value="1"/>
</dbReference>
<accession>Q3Z4P5</accession>